<name>SYS_CORDI</name>
<accession>Q6NEN2</accession>
<gene>
    <name evidence="1" type="primary">serS</name>
    <name type="ordered locus">DIP2240</name>
</gene>
<evidence type="ECO:0000255" key="1">
    <source>
        <dbReference type="HAMAP-Rule" id="MF_00176"/>
    </source>
</evidence>
<proteinExistence type="inferred from homology"/>
<reference key="1">
    <citation type="journal article" date="2003" name="Nucleic Acids Res.">
        <title>The complete genome sequence and analysis of Corynebacterium diphtheriae NCTC13129.</title>
        <authorList>
            <person name="Cerdeno-Tarraga A.-M."/>
            <person name="Efstratiou A."/>
            <person name="Dover L.G."/>
            <person name="Holden M.T.G."/>
            <person name="Pallen M.J."/>
            <person name="Bentley S.D."/>
            <person name="Besra G.S."/>
            <person name="Churcher C.M."/>
            <person name="James K.D."/>
            <person name="De Zoysa A."/>
            <person name="Chillingworth T."/>
            <person name="Cronin A."/>
            <person name="Dowd L."/>
            <person name="Feltwell T."/>
            <person name="Hamlin N."/>
            <person name="Holroyd S."/>
            <person name="Jagels K."/>
            <person name="Moule S."/>
            <person name="Quail M.A."/>
            <person name="Rabbinowitsch E."/>
            <person name="Rutherford K.M."/>
            <person name="Thomson N.R."/>
            <person name="Unwin L."/>
            <person name="Whitehead S."/>
            <person name="Barrell B.G."/>
            <person name="Parkhill J."/>
        </authorList>
    </citation>
    <scope>NUCLEOTIDE SEQUENCE [LARGE SCALE GENOMIC DNA]</scope>
    <source>
        <strain>ATCC 700971 / NCTC 13129 / Biotype gravis</strain>
    </source>
</reference>
<feature type="chain" id="PRO_1000019664" description="Serine--tRNA ligase">
    <location>
        <begin position="1"/>
        <end position="419"/>
    </location>
</feature>
<feature type="binding site" evidence="1">
    <location>
        <begin position="226"/>
        <end position="228"/>
    </location>
    <ligand>
        <name>L-serine</name>
        <dbReference type="ChEBI" id="CHEBI:33384"/>
    </ligand>
</feature>
<feature type="binding site" evidence="1">
    <location>
        <begin position="257"/>
        <end position="259"/>
    </location>
    <ligand>
        <name>ATP</name>
        <dbReference type="ChEBI" id="CHEBI:30616"/>
    </ligand>
</feature>
<feature type="binding site" evidence="1">
    <location>
        <position position="273"/>
    </location>
    <ligand>
        <name>ATP</name>
        <dbReference type="ChEBI" id="CHEBI:30616"/>
    </ligand>
</feature>
<feature type="binding site" evidence="1">
    <location>
        <position position="280"/>
    </location>
    <ligand>
        <name>L-serine</name>
        <dbReference type="ChEBI" id="CHEBI:33384"/>
    </ligand>
</feature>
<feature type="binding site" evidence="1">
    <location>
        <begin position="344"/>
        <end position="347"/>
    </location>
    <ligand>
        <name>ATP</name>
        <dbReference type="ChEBI" id="CHEBI:30616"/>
    </ligand>
</feature>
<feature type="binding site" evidence="1">
    <location>
        <position position="379"/>
    </location>
    <ligand>
        <name>L-serine</name>
        <dbReference type="ChEBI" id="CHEBI:33384"/>
    </ligand>
</feature>
<keyword id="KW-0030">Aminoacyl-tRNA synthetase</keyword>
<keyword id="KW-0067">ATP-binding</keyword>
<keyword id="KW-0963">Cytoplasm</keyword>
<keyword id="KW-0436">Ligase</keyword>
<keyword id="KW-0547">Nucleotide-binding</keyword>
<keyword id="KW-0648">Protein biosynthesis</keyword>
<keyword id="KW-1185">Reference proteome</keyword>
<protein>
    <recommendedName>
        <fullName evidence="1">Serine--tRNA ligase</fullName>
        <ecNumber evidence="1">6.1.1.11</ecNumber>
    </recommendedName>
    <alternativeName>
        <fullName evidence="1">Seryl-tRNA synthetase</fullName>
        <shortName evidence="1">SerRS</shortName>
    </alternativeName>
    <alternativeName>
        <fullName evidence="1">Seryl-tRNA(Ser/Sec) synthetase</fullName>
    </alternativeName>
</protein>
<comment type="function">
    <text evidence="1">Catalyzes the attachment of serine to tRNA(Ser). Is also able to aminoacylate tRNA(Sec) with serine, to form the misacylated tRNA L-seryl-tRNA(Sec), which will be further converted into selenocysteinyl-tRNA(Sec).</text>
</comment>
<comment type="catalytic activity">
    <reaction evidence="1">
        <text>tRNA(Ser) + L-serine + ATP = L-seryl-tRNA(Ser) + AMP + diphosphate + H(+)</text>
        <dbReference type="Rhea" id="RHEA:12292"/>
        <dbReference type="Rhea" id="RHEA-COMP:9669"/>
        <dbReference type="Rhea" id="RHEA-COMP:9703"/>
        <dbReference type="ChEBI" id="CHEBI:15378"/>
        <dbReference type="ChEBI" id="CHEBI:30616"/>
        <dbReference type="ChEBI" id="CHEBI:33019"/>
        <dbReference type="ChEBI" id="CHEBI:33384"/>
        <dbReference type="ChEBI" id="CHEBI:78442"/>
        <dbReference type="ChEBI" id="CHEBI:78533"/>
        <dbReference type="ChEBI" id="CHEBI:456215"/>
        <dbReference type="EC" id="6.1.1.11"/>
    </reaction>
</comment>
<comment type="catalytic activity">
    <reaction evidence="1">
        <text>tRNA(Sec) + L-serine + ATP = L-seryl-tRNA(Sec) + AMP + diphosphate + H(+)</text>
        <dbReference type="Rhea" id="RHEA:42580"/>
        <dbReference type="Rhea" id="RHEA-COMP:9742"/>
        <dbReference type="Rhea" id="RHEA-COMP:10128"/>
        <dbReference type="ChEBI" id="CHEBI:15378"/>
        <dbReference type="ChEBI" id="CHEBI:30616"/>
        <dbReference type="ChEBI" id="CHEBI:33019"/>
        <dbReference type="ChEBI" id="CHEBI:33384"/>
        <dbReference type="ChEBI" id="CHEBI:78442"/>
        <dbReference type="ChEBI" id="CHEBI:78533"/>
        <dbReference type="ChEBI" id="CHEBI:456215"/>
        <dbReference type="EC" id="6.1.1.11"/>
    </reaction>
</comment>
<comment type="pathway">
    <text evidence="1">Aminoacyl-tRNA biosynthesis; selenocysteinyl-tRNA(Sec) biosynthesis; L-seryl-tRNA(Sec) from L-serine and tRNA(Sec): step 1/1.</text>
</comment>
<comment type="subunit">
    <text evidence="1">Homodimer. The tRNA molecule binds across the dimer.</text>
</comment>
<comment type="subcellular location">
    <subcellularLocation>
        <location evidence="1">Cytoplasm</location>
    </subcellularLocation>
</comment>
<comment type="domain">
    <text evidence="1">Consists of two distinct domains, a catalytic core and a N-terminal extension that is involved in tRNA binding.</text>
</comment>
<comment type="similarity">
    <text evidence="1">Belongs to the class-II aminoacyl-tRNA synthetase family. Type-1 seryl-tRNA synthetase subfamily.</text>
</comment>
<dbReference type="EC" id="6.1.1.11" evidence="1"/>
<dbReference type="EMBL" id="BX248360">
    <property type="protein sequence ID" value="CAE50764.1"/>
    <property type="molecule type" value="Genomic_DNA"/>
</dbReference>
<dbReference type="RefSeq" id="WP_010935690.1">
    <property type="nucleotide sequence ID" value="NC_002935.2"/>
</dbReference>
<dbReference type="SMR" id="Q6NEN2"/>
<dbReference type="STRING" id="257309.DIP2240"/>
<dbReference type="KEGG" id="cdi:DIP2240"/>
<dbReference type="HOGENOM" id="CLU_023797_1_0_11"/>
<dbReference type="UniPathway" id="UPA00906">
    <property type="reaction ID" value="UER00895"/>
</dbReference>
<dbReference type="Proteomes" id="UP000002198">
    <property type="component" value="Chromosome"/>
</dbReference>
<dbReference type="GO" id="GO:0005737">
    <property type="term" value="C:cytoplasm"/>
    <property type="evidence" value="ECO:0007669"/>
    <property type="project" value="UniProtKB-SubCell"/>
</dbReference>
<dbReference type="GO" id="GO:0005524">
    <property type="term" value="F:ATP binding"/>
    <property type="evidence" value="ECO:0007669"/>
    <property type="project" value="UniProtKB-UniRule"/>
</dbReference>
<dbReference type="GO" id="GO:0004828">
    <property type="term" value="F:serine-tRNA ligase activity"/>
    <property type="evidence" value="ECO:0007669"/>
    <property type="project" value="UniProtKB-UniRule"/>
</dbReference>
<dbReference type="GO" id="GO:0016260">
    <property type="term" value="P:selenocysteine biosynthetic process"/>
    <property type="evidence" value="ECO:0007669"/>
    <property type="project" value="UniProtKB-UniRule"/>
</dbReference>
<dbReference type="GO" id="GO:0006434">
    <property type="term" value="P:seryl-tRNA aminoacylation"/>
    <property type="evidence" value="ECO:0007669"/>
    <property type="project" value="UniProtKB-UniRule"/>
</dbReference>
<dbReference type="CDD" id="cd00770">
    <property type="entry name" value="SerRS_core"/>
    <property type="match status" value="1"/>
</dbReference>
<dbReference type="Gene3D" id="3.30.930.10">
    <property type="entry name" value="Bira Bifunctional Protein, Domain 2"/>
    <property type="match status" value="1"/>
</dbReference>
<dbReference type="Gene3D" id="1.10.287.40">
    <property type="entry name" value="Serine-tRNA synthetase, tRNA binding domain"/>
    <property type="match status" value="1"/>
</dbReference>
<dbReference type="HAMAP" id="MF_00176">
    <property type="entry name" value="Ser_tRNA_synth_type1"/>
    <property type="match status" value="1"/>
</dbReference>
<dbReference type="InterPro" id="IPR002314">
    <property type="entry name" value="aa-tRNA-synt_IIb"/>
</dbReference>
<dbReference type="InterPro" id="IPR006195">
    <property type="entry name" value="aa-tRNA-synth_II"/>
</dbReference>
<dbReference type="InterPro" id="IPR045864">
    <property type="entry name" value="aa-tRNA-synth_II/BPL/LPL"/>
</dbReference>
<dbReference type="InterPro" id="IPR002317">
    <property type="entry name" value="Ser-tRNA-ligase_type_1"/>
</dbReference>
<dbReference type="InterPro" id="IPR015866">
    <property type="entry name" value="Ser-tRNA-synth_1_N"/>
</dbReference>
<dbReference type="InterPro" id="IPR042103">
    <property type="entry name" value="SerRS_1_N_sf"/>
</dbReference>
<dbReference type="InterPro" id="IPR033729">
    <property type="entry name" value="SerRS_core"/>
</dbReference>
<dbReference type="InterPro" id="IPR010978">
    <property type="entry name" value="tRNA-bd_arm"/>
</dbReference>
<dbReference type="NCBIfam" id="TIGR00414">
    <property type="entry name" value="serS"/>
    <property type="match status" value="1"/>
</dbReference>
<dbReference type="PANTHER" id="PTHR11778">
    <property type="entry name" value="SERYL-TRNA SYNTHETASE"/>
    <property type="match status" value="1"/>
</dbReference>
<dbReference type="Pfam" id="PF02403">
    <property type="entry name" value="Seryl_tRNA_N"/>
    <property type="match status" value="1"/>
</dbReference>
<dbReference type="Pfam" id="PF00587">
    <property type="entry name" value="tRNA-synt_2b"/>
    <property type="match status" value="1"/>
</dbReference>
<dbReference type="PIRSF" id="PIRSF001529">
    <property type="entry name" value="Ser-tRNA-synth_IIa"/>
    <property type="match status" value="1"/>
</dbReference>
<dbReference type="PRINTS" id="PR00981">
    <property type="entry name" value="TRNASYNTHSER"/>
</dbReference>
<dbReference type="SUPFAM" id="SSF55681">
    <property type="entry name" value="Class II aaRS and biotin synthetases"/>
    <property type="match status" value="1"/>
</dbReference>
<dbReference type="SUPFAM" id="SSF46589">
    <property type="entry name" value="tRNA-binding arm"/>
    <property type="match status" value="1"/>
</dbReference>
<dbReference type="PROSITE" id="PS50862">
    <property type="entry name" value="AA_TRNA_LIGASE_II"/>
    <property type="match status" value="1"/>
</dbReference>
<organism>
    <name type="scientific">Corynebacterium diphtheriae (strain ATCC 700971 / NCTC 13129 / Biotype gravis)</name>
    <dbReference type="NCBI Taxonomy" id="257309"/>
    <lineage>
        <taxon>Bacteria</taxon>
        <taxon>Bacillati</taxon>
        <taxon>Actinomycetota</taxon>
        <taxon>Actinomycetes</taxon>
        <taxon>Mycobacteriales</taxon>
        <taxon>Corynebacteriaceae</taxon>
        <taxon>Corynebacterium</taxon>
    </lineage>
</organism>
<sequence length="419" mass="46546">MIDLKLLRENPDVVRESQRIRGEDPALVDQLLEADEKRREAIKSADDLRAEHKAFGKKISQASPEERPALLEGSNELKSRVKAAEEAEAEALAKVNEIQMLFGNVVTDAPAGGEDDYIVLEHVGTPRTFDFEPKDHLDLGESLGLIDVKRGTKVGGARFYYLTGDGAFLQLGMLNLAAQKARENGFQLMIPPVLVRPEVMSGTGFLGAHSDEIYYLERDDLYLVGTSEVALAGYHQDEIIDLSDGPIKYAGWSSCFRREAGSYGKDTRGILRVHQFDKLEMFVYCKPEEAVAQHQALLNMEREMLAAVEVPYRIIDVAGGDLGSSAARKFDTEAWIPTQNTYRELTSTSNCTTFQARRLRTRYRDESGKAHTAATLNGTLATTRWLVAILENNQQADGSVIVPEALRPFVGKEVLEPKK</sequence>